<comment type="function">
    <text evidence="2">Part of the binding-protein-dependent transport system for uptake of C4-dicarboxylates. Responsible for growth on fumarate and succinate but not malate. Is not directly involved in C4-dicarboxylate uptake, but plays a sensory role in the DctS/DctR two-component system which regulates the expression of the dctA C4-dicarboxylate transporter.</text>
</comment>
<comment type="subcellular location">
    <subcellularLocation>
        <location evidence="3">Secreted</location>
    </subcellularLocation>
</comment>
<comment type="similarity">
    <text evidence="3">Belongs to the bacterial solute-binding protein 7 family.</text>
</comment>
<sequence>MKSLLACLALMIAGIATALFIGFHDHTGNKKIVYDDDQEGLQDQIVFKFSHVVAENTPKGLAANKFADLVNEKSGGKIKIEVFPNGSLYSDIEEIEALQNGDVQFIAPSTSKLGMLSPEWGVLDLPYAFTDYNAVKKGLNGSIGTQLFDSLKKNQLKGLAYWTNGFKQITTNQGPVKTPDDLKGQDLRIMQSDVIEDQFKLLGATPHQESFNSTFQLLENNVVDGEENTISNIYSKKFYNVQDYLTISSHGYLGYAVMTDEHFWKAQTPETRRILTEAMKETTEWNETYAEQMNKEQLEEIKKNSAIHIYELSDKEKQEWMKRLDPVYRQYEPIFGRELIRELLELRKDS</sequence>
<proteinExistence type="inferred from homology"/>
<evidence type="ECO:0000255" key="1"/>
<evidence type="ECO:0000269" key="2">
    <source>
    </source>
</evidence>
<evidence type="ECO:0000305" key="3"/>
<accession>P96600</accession>
<accession>Q797L6</accession>
<keyword id="KW-1185">Reference proteome</keyword>
<keyword id="KW-0964">Secreted</keyword>
<keyword id="KW-0732">Signal</keyword>
<keyword id="KW-0762">Sugar transport</keyword>
<keyword id="KW-0813">Transport</keyword>
<protein>
    <recommendedName>
        <fullName>C4-dicarboxylate-binding protein DctB</fullName>
    </recommendedName>
</protein>
<organism>
    <name type="scientific">Bacillus subtilis (strain 168)</name>
    <dbReference type="NCBI Taxonomy" id="224308"/>
    <lineage>
        <taxon>Bacteria</taxon>
        <taxon>Bacillati</taxon>
        <taxon>Bacillota</taxon>
        <taxon>Bacilli</taxon>
        <taxon>Bacillales</taxon>
        <taxon>Bacillaceae</taxon>
        <taxon>Bacillus</taxon>
    </lineage>
</organism>
<dbReference type="EMBL" id="AB001488">
    <property type="protein sequence ID" value="BAA19281.1"/>
    <property type="molecule type" value="Genomic_DNA"/>
</dbReference>
<dbReference type="EMBL" id="AL009126">
    <property type="protein sequence ID" value="CAB12251.1"/>
    <property type="molecule type" value="Genomic_DNA"/>
</dbReference>
<dbReference type="PIR" id="H69770">
    <property type="entry name" value="H69770"/>
</dbReference>
<dbReference type="RefSeq" id="NP_388325.1">
    <property type="nucleotide sequence ID" value="NC_000964.3"/>
</dbReference>
<dbReference type="RefSeq" id="WP_003234350.1">
    <property type="nucleotide sequence ID" value="NZ_OZ025638.1"/>
</dbReference>
<dbReference type="SMR" id="P96600"/>
<dbReference type="FunCoup" id="P96600">
    <property type="interactions" value="140"/>
</dbReference>
<dbReference type="STRING" id="224308.BSU04440"/>
<dbReference type="PaxDb" id="224308-BSU04440"/>
<dbReference type="EnsemblBacteria" id="CAB12251">
    <property type="protein sequence ID" value="CAB12251"/>
    <property type="gene ID" value="BSU_04440"/>
</dbReference>
<dbReference type="GeneID" id="938226"/>
<dbReference type="KEGG" id="bsu:BSU04440"/>
<dbReference type="PATRIC" id="fig|224308.179.peg.470"/>
<dbReference type="eggNOG" id="COG1638">
    <property type="taxonomic scope" value="Bacteria"/>
</dbReference>
<dbReference type="InParanoid" id="P96600"/>
<dbReference type="OrthoDB" id="9776801at2"/>
<dbReference type="PhylomeDB" id="P96600"/>
<dbReference type="BioCyc" id="BSUB:BSU04440-MONOMER"/>
<dbReference type="Proteomes" id="UP000001570">
    <property type="component" value="Chromosome"/>
</dbReference>
<dbReference type="GO" id="GO:0005576">
    <property type="term" value="C:extracellular region"/>
    <property type="evidence" value="ECO:0007669"/>
    <property type="project" value="UniProtKB-SubCell"/>
</dbReference>
<dbReference type="GO" id="GO:0030288">
    <property type="term" value="C:outer membrane-bounded periplasmic space"/>
    <property type="evidence" value="ECO:0007669"/>
    <property type="project" value="InterPro"/>
</dbReference>
<dbReference type="GO" id="GO:0055085">
    <property type="term" value="P:transmembrane transport"/>
    <property type="evidence" value="ECO:0007669"/>
    <property type="project" value="InterPro"/>
</dbReference>
<dbReference type="CDD" id="cd13674">
    <property type="entry name" value="PBP2_TRAP_SBP_like_1"/>
    <property type="match status" value="1"/>
</dbReference>
<dbReference type="Gene3D" id="3.40.190.170">
    <property type="entry name" value="Bacterial extracellular solute-binding protein, family 7"/>
    <property type="match status" value="1"/>
</dbReference>
<dbReference type="InterPro" id="IPR018389">
    <property type="entry name" value="DctP_fam"/>
</dbReference>
<dbReference type="InterPro" id="IPR004682">
    <property type="entry name" value="TRAP_DctP"/>
</dbReference>
<dbReference type="InterPro" id="IPR038404">
    <property type="entry name" value="TRAP_DctP_sf"/>
</dbReference>
<dbReference type="NCBIfam" id="TIGR00787">
    <property type="entry name" value="dctP"/>
    <property type="match status" value="1"/>
</dbReference>
<dbReference type="NCBIfam" id="NF037995">
    <property type="entry name" value="TRAP_S1"/>
    <property type="match status" value="1"/>
</dbReference>
<dbReference type="PANTHER" id="PTHR33376">
    <property type="match status" value="1"/>
</dbReference>
<dbReference type="PANTHER" id="PTHR33376:SF7">
    <property type="entry name" value="C4-DICARBOXYLATE-BINDING PROTEIN DCTB"/>
    <property type="match status" value="1"/>
</dbReference>
<dbReference type="Pfam" id="PF03480">
    <property type="entry name" value="DctP"/>
    <property type="match status" value="1"/>
</dbReference>
<dbReference type="PIRSF" id="PIRSF006470">
    <property type="entry name" value="DctB"/>
    <property type="match status" value="1"/>
</dbReference>
<feature type="signal peptide" evidence="1">
    <location>
        <begin position="1"/>
        <end position="18"/>
    </location>
</feature>
<feature type="chain" id="PRO_0000360643" description="C4-dicarboxylate-binding protein DctB">
    <location>
        <begin position="19"/>
        <end position="350"/>
    </location>
</feature>
<reference key="1">
    <citation type="submission" date="1997-03" db="EMBL/GenBank/DDBJ databases">
        <title>A 148 kbp sequence of the region between 35 and 47 degree of the Bacillus subtilis genome.</title>
        <authorList>
            <person name="Kasahara Y."/>
            <person name="Nakai S."/>
            <person name="Lee S."/>
            <person name="Sadaie Y."/>
            <person name="Ogasawara N."/>
        </authorList>
    </citation>
    <scope>NUCLEOTIDE SEQUENCE [GENOMIC DNA]</scope>
    <source>
        <strain>168</strain>
    </source>
</reference>
<reference key="2">
    <citation type="journal article" date="1997" name="Nature">
        <title>The complete genome sequence of the Gram-positive bacterium Bacillus subtilis.</title>
        <authorList>
            <person name="Kunst F."/>
            <person name="Ogasawara N."/>
            <person name="Moszer I."/>
            <person name="Albertini A.M."/>
            <person name="Alloni G."/>
            <person name="Azevedo V."/>
            <person name="Bertero M.G."/>
            <person name="Bessieres P."/>
            <person name="Bolotin A."/>
            <person name="Borchert S."/>
            <person name="Borriss R."/>
            <person name="Boursier L."/>
            <person name="Brans A."/>
            <person name="Braun M."/>
            <person name="Brignell S.C."/>
            <person name="Bron S."/>
            <person name="Brouillet S."/>
            <person name="Bruschi C.V."/>
            <person name="Caldwell B."/>
            <person name="Capuano V."/>
            <person name="Carter N.M."/>
            <person name="Choi S.-K."/>
            <person name="Codani J.-J."/>
            <person name="Connerton I.F."/>
            <person name="Cummings N.J."/>
            <person name="Daniel R.A."/>
            <person name="Denizot F."/>
            <person name="Devine K.M."/>
            <person name="Duesterhoeft A."/>
            <person name="Ehrlich S.D."/>
            <person name="Emmerson P.T."/>
            <person name="Entian K.-D."/>
            <person name="Errington J."/>
            <person name="Fabret C."/>
            <person name="Ferrari E."/>
            <person name="Foulger D."/>
            <person name="Fritz C."/>
            <person name="Fujita M."/>
            <person name="Fujita Y."/>
            <person name="Fuma S."/>
            <person name="Galizzi A."/>
            <person name="Galleron N."/>
            <person name="Ghim S.-Y."/>
            <person name="Glaser P."/>
            <person name="Goffeau A."/>
            <person name="Golightly E.J."/>
            <person name="Grandi G."/>
            <person name="Guiseppi G."/>
            <person name="Guy B.J."/>
            <person name="Haga K."/>
            <person name="Haiech J."/>
            <person name="Harwood C.R."/>
            <person name="Henaut A."/>
            <person name="Hilbert H."/>
            <person name="Holsappel S."/>
            <person name="Hosono S."/>
            <person name="Hullo M.-F."/>
            <person name="Itaya M."/>
            <person name="Jones L.-M."/>
            <person name="Joris B."/>
            <person name="Karamata D."/>
            <person name="Kasahara Y."/>
            <person name="Klaerr-Blanchard M."/>
            <person name="Klein C."/>
            <person name="Kobayashi Y."/>
            <person name="Koetter P."/>
            <person name="Koningstein G."/>
            <person name="Krogh S."/>
            <person name="Kumano M."/>
            <person name="Kurita K."/>
            <person name="Lapidus A."/>
            <person name="Lardinois S."/>
            <person name="Lauber J."/>
            <person name="Lazarevic V."/>
            <person name="Lee S.-M."/>
            <person name="Levine A."/>
            <person name="Liu H."/>
            <person name="Masuda S."/>
            <person name="Mauel C."/>
            <person name="Medigue C."/>
            <person name="Medina N."/>
            <person name="Mellado R.P."/>
            <person name="Mizuno M."/>
            <person name="Moestl D."/>
            <person name="Nakai S."/>
            <person name="Noback M."/>
            <person name="Noone D."/>
            <person name="O'Reilly M."/>
            <person name="Ogawa K."/>
            <person name="Ogiwara A."/>
            <person name="Oudega B."/>
            <person name="Park S.-H."/>
            <person name="Parro V."/>
            <person name="Pohl T.M."/>
            <person name="Portetelle D."/>
            <person name="Porwollik S."/>
            <person name="Prescott A.M."/>
            <person name="Presecan E."/>
            <person name="Pujic P."/>
            <person name="Purnelle B."/>
            <person name="Rapoport G."/>
            <person name="Rey M."/>
            <person name="Reynolds S."/>
            <person name="Rieger M."/>
            <person name="Rivolta C."/>
            <person name="Rocha E."/>
            <person name="Roche B."/>
            <person name="Rose M."/>
            <person name="Sadaie Y."/>
            <person name="Sato T."/>
            <person name="Scanlan E."/>
            <person name="Schleich S."/>
            <person name="Schroeter R."/>
            <person name="Scoffone F."/>
            <person name="Sekiguchi J."/>
            <person name="Sekowska A."/>
            <person name="Seror S.J."/>
            <person name="Serror P."/>
            <person name="Shin B.-S."/>
            <person name="Soldo B."/>
            <person name="Sorokin A."/>
            <person name="Tacconi E."/>
            <person name="Takagi T."/>
            <person name="Takahashi H."/>
            <person name="Takemaru K."/>
            <person name="Takeuchi M."/>
            <person name="Tamakoshi A."/>
            <person name="Tanaka T."/>
            <person name="Terpstra P."/>
            <person name="Tognoni A."/>
            <person name="Tosato V."/>
            <person name="Uchiyama S."/>
            <person name="Vandenbol M."/>
            <person name="Vannier F."/>
            <person name="Vassarotti A."/>
            <person name="Viari A."/>
            <person name="Wambutt R."/>
            <person name="Wedler E."/>
            <person name="Wedler H."/>
            <person name="Weitzenegger T."/>
            <person name="Winters P."/>
            <person name="Wipat A."/>
            <person name="Yamamoto H."/>
            <person name="Yamane K."/>
            <person name="Yasumoto K."/>
            <person name="Yata K."/>
            <person name="Yoshida K."/>
            <person name="Yoshikawa H.-F."/>
            <person name="Zumstein E."/>
            <person name="Yoshikawa H."/>
            <person name="Danchin A."/>
        </authorList>
    </citation>
    <scope>NUCLEOTIDE SEQUENCE [LARGE SCALE GENOMIC DNA]</scope>
    <source>
        <strain>168</strain>
    </source>
</reference>
<reference key="3">
    <citation type="journal article" date="2000" name="Microbiology">
        <title>Regulation of the transport system for C4-dicarboxylic acids in Bacillus subtilis.</title>
        <authorList>
            <person name="Asai K."/>
            <person name="Baik S.-H."/>
            <person name="Kasahara Y."/>
            <person name="Moriya S."/>
            <person name="Ogasawara N."/>
        </authorList>
    </citation>
    <scope>FUNCTION</scope>
</reference>
<gene>
    <name type="primary">dctB</name>
    <name type="synonym">ydbE</name>
    <name type="ordered locus">BSU04440</name>
</gene>
<name>DCTB_BACSU</name>